<evidence type="ECO:0000255" key="1">
    <source>
        <dbReference type="HAMAP-Rule" id="MF_00480"/>
    </source>
</evidence>
<evidence type="ECO:0000305" key="2"/>
<reference key="1">
    <citation type="journal article" date="2001" name="DNA Res.">
        <title>Complete genome sequence of an aerobic thermoacidophilic Crenarchaeon, Sulfolobus tokodaii strain7.</title>
        <authorList>
            <person name="Kawarabayasi Y."/>
            <person name="Hino Y."/>
            <person name="Horikawa H."/>
            <person name="Jin-no K."/>
            <person name="Takahashi M."/>
            <person name="Sekine M."/>
            <person name="Baba S."/>
            <person name="Ankai A."/>
            <person name="Kosugi H."/>
            <person name="Hosoyama A."/>
            <person name="Fukui S."/>
            <person name="Nagai Y."/>
            <person name="Nishijima K."/>
            <person name="Otsuka R."/>
            <person name="Nakazawa H."/>
            <person name="Takamiya M."/>
            <person name="Kato Y."/>
            <person name="Yoshizawa T."/>
            <person name="Tanaka T."/>
            <person name="Kudoh Y."/>
            <person name="Yamazaki J."/>
            <person name="Kushida N."/>
            <person name="Oguchi A."/>
            <person name="Aoki K."/>
            <person name="Masuda S."/>
            <person name="Yanagii M."/>
            <person name="Nishimura M."/>
            <person name="Yamagishi A."/>
            <person name="Oshima T."/>
            <person name="Kikuchi H."/>
        </authorList>
    </citation>
    <scope>NUCLEOTIDE SEQUENCE [LARGE SCALE GENOMIC DNA]</scope>
    <source>
        <strain>DSM 16993 / JCM 10545 / NBRC 100140 / 7</strain>
    </source>
</reference>
<comment type="function">
    <text evidence="1">One of the primary rRNA binding proteins, it binds directly to 16S rRNA where it nucleates assembly of the head domain of the 30S subunit. Is located at the subunit interface close to the decoding center.</text>
</comment>
<comment type="subunit">
    <text evidence="1">Part of the 30S ribosomal subunit.</text>
</comment>
<comment type="similarity">
    <text evidence="1">Belongs to the universal ribosomal protein uS7 family.</text>
</comment>
<gene>
    <name evidence="1" type="primary">rps7</name>
    <name type="ordered locus">STK_02700</name>
</gene>
<sequence>MESFEVSSIDLKVFGKWDTKVEIRDPSLKKYIGLMPVYLPHTGGRHEHRRFGKAKLPIVERLINNVMRPGRNKGKKMLAYNIVKTAFDIIALKTGQNPIQVLVKAIENSAPREEVTRIMYGGIVYYVAVDVAPQRRVDLALRHLVMGAKEASFNNPKPIEEALAEEIIAAASNDPKSFAIRKKEEIERIALSSR</sequence>
<dbReference type="EMBL" id="BA000023">
    <property type="protein sequence ID" value="BAB65237.1"/>
    <property type="molecule type" value="Genomic_DNA"/>
</dbReference>
<dbReference type="RefSeq" id="WP_010978220.1">
    <property type="nucleotide sequence ID" value="NC_003106.2"/>
</dbReference>
<dbReference type="SMR" id="Q976B0"/>
<dbReference type="STRING" id="273063.STK_02700"/>
<dbReference type="GeneID" id="1458171"/>
<dbReference type="KEGG" id="sto:STK_02700"/>
<dbReference type="PATRIC" id="fig|273063.9.peg.321"/>
<dbReference type="eggNOG" id="arCOG04254">
    <property type="taxonomic scope" value="Archaea"/>
</dbReference>
<dbReference type="OrthoDB" id="45346at2157"/>
<dbReference type="Proteomes" id="UP000001015">
    <property type="component" value="Chromosome"/>
</dbReference>
<dbReference type="GO" id="GO:0015935">
    <property type="term" value="C:small ribosomal subunit"/>
    <property type="evidence" value="ECO:0007669"/>
    <property type="project" value="InterPro"/>
</dbReference>
<dbReference type="GO" id="GO:0019843">
    <property type="term" value="F:rRNA binding"/>
    <property type="evidence" value="ECO:0007669"/>
    <property type="project" value="UniProtKB-UniRule"/>
</dbReference>
<dbReference type="GO" id="GO:0003735">
    <property type="term" value="F:structural constituent of ribosome"/>
    <property type="evidence" value="ECO:0007669"/>
    <property type="project" value="InterPro"/>
</dbReference>
<dbReference type="GO" id="GO:0006412">
    <property type="term" value="P:translation"/>
    <property type="evidence" value="ECO:0007669"/>
    <property type="project" value="UniProtKB-UniRule"/>
</dbReference>
<dbReference type="CDD" id="cd14867">
    <property type="entry name" value="uS7_Eukaryote"/>
    <property type="match status" value="1"/>
</dbReference>
<dbReference type="FunFam" id="1.10.455.10:FF:000011">
    <property type="entry name" value="30S ribosomal protein S7"/>
    <property type="match status" value="1"/>
</dbReference>
<dbReference type="Gene3D" id="1.10.455.10">
    <property type="entry name" value="Ribosomal protein S7 domain"/>
    <property type="match status" value="1"/>
</dbReference>
<dbReference type="HAMAP" id="MF_00480_A">
    <property type="entry name" value="Ribosomal_uS7_A"/>
    <property type="match status" value="1"/>
</dbReference>
<dbReference type="InterPro" id="IPR000235">
    <property type="entry name" value="Ribosomal_uS7"/>
</dbReference>
<dbReference type="InterPro" id="IPR026018">
    <property type="entry name" value="Ribosomal_uS7_arc"/>
</dbReference>
<dbReference type="InterPro" id="IPR020606">
    <property type="entry name" value="Ribosomal_uS7_CS"/>
</dbReference>
<dbReference type="InterPro" id="IPR023798">
    <property type="entry name" value="Ribosomal_uS7_dom"/>
</dbReference>
<dbReference type="InterPro" id="IPR036823">
    <property type="entry name" value="Ribosomal_uS7_dom_sf"/>
</dbReference>
<dbReference type="InterPro" id="IPR005716">
    <property type="entry name" value="Ribosomal_uS7_euk/arc"/>
</dbReference>
<dbReference type="NCBIfam" id="NF003106">
    <property type="entry name" value="PRK04027.1"/>
    <property type="match status" value="1"/>
</dbReference>
<dbReference type="NCBIfam" id="TIGR01028">
    <property type="entry name" value="uS7_euk_arch"/>
    <property type="match status" value="1"/>
</dbReference>
<dbReference type="PANTHER" id="PTHR11205">
    <property type="entry name" value="RIBOSOMAL PROTEIN S7"/>
    <property type="match status" value="1"/>
</dbReference>
<dbReference type="Pfam" id="PF00177">
    <property type="entry name" value="Ribosomal_S7"/>
    <property type="match status" value="1"/>
</dbReference>
<dbReference type="PIRSF" id="PIRSF002122">
    <property type="entry name" value="RPS7p_RPS7a_RPS5e_RPS7o"/>
    <property type="match status" value="1"/>
</dbReference>
<dbReference type="SUPFAM" id="SSF47973">
    <property type="entry name" value="Ribosomal protein S7"/>
    <property type="match status" value="1"/>
</dbReference>
<dbReference type="PROSITE" id="PS00052">
    <property type="entry name" value="RIBOSOMAL_S7"/>
    <property type="match status" value="1"/>
</dbReference>
<name>RS7_SULTO</name>
<protein>
    <recommendedName>
        <fullName evidence="1">Small ribosomal subunit protein uS7</fullName>
    </recommendedName>
    <alternativeName>
        <fullName evidence="2">30S ribosomal protein S7</fullName>
    </alternativeName>
</protein>
<organism>
    <name type="scientific">Sulfurisphaera tokodaii (strain DSM 16993 / JCM 10545 / NBRC 100140 / 7)</name>
    <name type="common">Sulfolobus tokodaii</name>
    <dbReference type="NCBI Taxonomy" id="273063"/>
    <lineage>
        <taxon>Archaea</taxon>
        <taxon>Thermoproteota</taxon>
        <taxon>Thermoprotei</taxon>
        <taxon>Sulfolobales</taxon>
        <taxon>Sulfolobaceae</taxon>
        <taxon>Sulfurisphaera</taxon>
    </lineage>
</organism>
<feature type="chain" id="PRO_0000124414" description="Small ribosomal subunit protein uS7">
    <location>
        <begin position="1"/>
        <end position="194"/>
    </location>
</feature>
<keyword id="KW-1185">Reference proteome</keyword>
<keyword id="KW-0687">Ribonucleoprotein</keyword>
<keyword id="KW-0689">Ribosomal protein</keyword>
<keyword id="KW-0694">RNA-binding</keyword>
<keyword id="KW-0699">rRNA-binding</keyword>
<accession>Q976B0</accession>
<proteinExistence type="inferred from homology"/>